<reference key="1">
    <citation type="journal article" date="2008" name="PLoS Genet.">
        <title>The genome of Borrelia recurrentis, the agent of deadly louse-borne relapsing fever, is a degraded subset of tick-borne Borrelia duttonii.</title>
        <authorList>
            <person name="Lescot M."/>
            <person name="Audic S."/>
            <person name="Robert C."/>
            <person name="Nguyen T.T."/>
            <person name="Blanc G."/>
            <person name="Cutler S.J."/>
            <person name="Wincker P."/>
            <person name="Couloux A."/>
            <person name="Claverie J.-M."/>
            <person name="Raoult D."/>
            <person name="Drancourt M."/>
        </authorList>
    </citation>
    <scope>NUCLEOTIDE SEQUENCE [LARGE SCALE GENOMIC DNA]</scope>
    <source>
        <strain>A1</strain>
    </source>
</reference>
<sequence>MLSPRKVKYRKKQRGRLSGEAQKGNKISFGEYGLVSLEADFITARQIEAARVAMTRRVKRGGKVWIRIFPDIPYTKKPAETRMGKGKGGVDHWNAPVKLGTVMFEISGVPRELAESAMMLASSKLPVKTTFVVRRDLR</sequence>
<protein>
    <recommendedName>
        <fullName evidence="1">Large ribosomal subunit protein uL16</fullName>
    </recommendedName>
    <alternativeName>
        <fullName evidence="3">50S ribosomal protein L16</fullName>
    </alternativeName>
</protein>
<name>RL16_BORRA</name>
<proteinExistence type="inferred from homology"/>
<organism>
    <name type="scientific">Borrelia recurrentis (strain A1)</name>
    <dbReference type="NCBI Taxonomy" id="412418"/>
    <lineage>
        <taxon>Bacteria</taxon>
        <taxon>Pseudomonadati</taxon>
        <taxon>Spirochaetota</taxon>
        <taxon>Spirochaetia</taxon>
        <taxon>Spirochaetales</taxon>
        <taxon>Borreliaceae</taxon>
        <taxon>Borrelia</taxon>
    </lineage>
</organism>
<gene>
    <name evidence="1" type="primary">rplP</name>
    <name type="ordered locus">BRE_491</name>
</gene>
<dbReference type="EMBL" id="CP000993">
    <property type="protein sequence ID" value="ACH94723.1"/>
    <property type="molecule type" value="Genomic_DNA"/>
</dbReference>
<dbReference type="RefSeq" id="WP_012538936.1">
    <property type="nucleotide sequence ID" value="NC_011244.1"/>
</dbReference>
<dbReference type="SMR" id="B5RPI9"/>
<dbReference type="KEGG" id="bre:BRE_491"/>
<dbReference type="HOGENOM" id="CLU_078858_2_1_12"/>
<dbReference type="Proteomes" id="UP000000612">
    <property type="component" value="Chromosome"/>
</dbReference>
<dbReference type="GO" id="GO:0022625">
    <property type="term" value="C:cytosolic large ribosomal subunit"/>
    <property type="evidence" value="ECO:0007669"/>
    <property type="project" value="TreeGrafter"/>
</dbReference>
<dbReference type="GO" id="GO:0019843">
    <property type="term" value="F:rRNA binding"/>
    <property type="evidence" value="ECO:0007669"/>
    <property type="project" value="UniProtKB-UniRule"/>
</dbReference>
<dbReference type="GO" id="GO:0003735">
    <property type="term" value="F:structural constituent of ribosome"/>
    <property type="evidence" value="ECO:0007669"/>
    <property type="project" value="InterPro"/>
</dbReference>
<dbReference type="GO" id="GO:0000049">
    <property type="term" value="F:tRNA binding"/>
    <property type="evidence" value="ECO:0007669"/>
    <property type="project" value="UniProtKB-KW"/>
</dbReference>
<dbReference type="GO" id="GO:0006412">
    <property type="term" value="P:translation"/>
    <property type="evidence" value="ECO:0007669"/>
    <property type="project" value="UniProtKB-UniRule"/>
</dbReference>
<dbReference type="CDD" id="cd01433">
    <property type="entry name" value="Ribosomal_L16_L10e"/>
    <property type="match status" value="1"/>
</dbReference>
<dbReference type="FunFam" id="3.90.1170.10:FF:000001">
    <property type="entry name" value="50S ribosomal protein L16"/>
    <property type="match status" value="1"/>
</dbReference>
<dbReference type="Gene3D" id="3.90.1170.10">
    <property type="entry name" value="Ribosomal protein L10e/L16"/>
    <property type="match status" value="1"/>
</dbReference>
<dbReference type="HAMAP" id="MF_01342">
    <property type="entry name" value="Ribosomal_uL16"/>
    <property type="match status" value="1"/>
</dbReference>
<dbReference type="InterPro" id="IPR047873">
    <property type="entry name" value="Ribosomal_uL16"/>
</dbReference>
<dbReference type="InterPro" id="IPR000114">
    <property type="entry name" value="Ribosomal_uL16_bact-type"/>
</dbReference>
<dbReference type="InterPro" id="IPR020798">
    <property type="entry name" value="Ribosomal_uL16_CS"/>
</dbReference>
<dbReference type="InterPro" id="IPR016180">
    <property type="entry name" value="Ribosomal_uL16_dom"/>
</dbReference>
<dbReference type="InterPro" id="IPR036920">
    <property type="entry name" value="Ribosomal_uL16_sf"/>
</dbReference>
<dbReference type="NCBIfam" id="TIGR01164">
    <property type="entry name" value="rplP_bact"/>
    <property type="match status" value="1"/>
</dbReference>
<dbReference type="PANTHER" id="PTHR12220">
    <property type="entry name" value="50S/60S RIBOSOMAL PROTEIN L16"/>
    <property type="match status" value="1"/>
</dbReference>
<dbReference type="PANTHER" id="PTHR12220:SF13">
    <property type="entry name" value="LARGE RIBOSOMAL SUBUNIT PROTEIN UL16M"/>
    <property type="match status" value="1"/>
</dbReference>
<dbReference type="Pfam" id="PF00252">
    <property type="entry name" value="Ribosomal_L16"/>
    <property type="match status" value="1"/>
</dbReference>
<dbReference type="PRINTS" id="PR00060">
    <property type="entry name" value="RIBOSOMALL16"/>
</dbReference>
<dbReference type="SUPFAM" id="SSF54686">
    <property type="entry name" value="Ribosomal protein L16p/L10e"/>
    <property type="match status" value="1"/>
</dbReference>
<dbReference type="PROSITE" id="PS00586">
    <property type="entry name" value="RIBOSOMAL_L16_1"/>
    <property type="match status" value="1"/>
</dbReference>
<dbReference type="PROSITE" id="PS00701">
    <property type="entry name" value="RIBOSOMAL_L16_2"/>
    <property type="match status" value="1"/>
</dbReference>
<evidence type="ECO:0000255" key="1">
    <source>
        <dbReference type="HAMAP-Rule" id="MF_01342"/>
    </source>
</evidence>
<evidence type="ECO:0000256" key="2">
    <source>
        <dbReference type="SAM" id="MobiDB-lite"/>
    </source>
</evidence>
<evidence type="ECO:0000305" key="3"/>
<feature type="chain" id="PRO_1000142933" description="Large ribosomal subunit protein uL16">
    <location>
        <begin position="1"/>
        <end position="138"/>
    </location>
</feature>
<feature type="region of interest" description="Disordered" evidence="2">
    <location>
        <begin position="1"/>
        <end position="21"/>
    </location>
</feature>
<feature type="compositionally biased region" description="Basic residues" evidence="2">
    <location>
        <begin position="1"/>
        <end position="15"/>
    </location>
</feature>
<keyword id="KW-0687">Ribonucleoprotein</keyword>
<keyword id="KW-0689">Ribosomal protein</keyword>
<keyword id="KW-0694">RNA-binding</keyword>
<keyword id="KW-0699">rRNA-binding</keyword>
<keyword id="KW-0820">tRNA-binding</keyword>
<accession>B5RPI9</accession>
<comment type="function">
    <text evidence="1">Binds 23S rRNA and is also seen to make contacts with the A and possibly P site tRNAs.</text>
</comment>
<comment type="subunit">
    <text evidence="1">Part of the 50S ribosomal subunit.</text>
</comment>
<comment type="similarity">
    <text evidence="1">Belongs to the universal ribosomal protein uL16 family.</text>
</comment>